<keyword id="KW-0997">Cell inner membrane</keyword>
<keyword id="KW-1003">Cell membrane</keyword>
<keyword id="KW-0201">Cytochrome c-type biogenesis</keyword>
<keyword id="KW-1015">Disulfide bond</keyword>
<keyword id="KW-0249">Electron transport</keyword>
<keyword id="KW-0472">Membrane</keyword>
<keyword id="KW-0520">NAD</keyword>
<keyword id="KW-0560">Oxidoreductase</keyword>
<keyword id="KW-0676">Redox-active center</keyword>
<keyword id="KW-0732">Signal</keyword>
<keyword id="KW-0812">Transmembrane</keyword>
<keyword id="KW-1133">Transmembrane helix</keyword>
<keyword id="KW-0813">Transport</keyword>
<proteinExistence type="inferred from homology"/>
<gene>
    <name evidence="1" type="primary">dsbD</name>
    <name type="ordered locus">ECP_4380</name>
</gene>
<comment type="function">
    <text evidence="1">Required to facilitate the formation of correct disulfide bonds in some periplasmic proteins and for the assembly of the periplasmic c-type cytochromes. Acts by transferring electrons from cytoplasmic thioredoxin to the periplasm. This transfer involves a cascade of disulfide bond formation and reduction steps.</text>
</comment>
<comment type="catalytic activity">
    <reaction evidence="1">
        <text>[protein]-dithiol + NAD(+) = [protein]-disulfide + NADH + H(+)</text>
        <dbReference type="Rhea" id="RHEA:18749"/>
        <dbReference type="Rhea" id="RHEA-COMP:10593"/>
        <dbReference type="Rhea" id="RHEA-COMP:10594"/>
        <dbReference type="ChEBI" id="CHEBI:15378"/>
        <dbReference type="ChEBI" id="CHEBI:29950"/>
        <dbReference type="ChEBI" id="CHEBI:50058"/>
        <dbReference type="ChEBI" id="CHEBI:57540"/>
        <dbReference type="ChEBI" id="CHEBI:57945"/>
        <dbReference type="EC" id="1.8.1.8"/>
    </reaction>
</comment>
<comment type="catalytic activity">
    <reaction evidence="1">
        <text>[protein]-dithiol + NADP(+) = [protein]-disulfide + NADPH + H(+)</text>
        <dbReference type="Rhea" id="RHEA:18753"/>
        <dbReference type="Rhea" id="RHEA-COMP:10593"/>
        <dbReference type="Rhea" id="RHEA-COMP:10594"/>
        <dbReference type="ChEBI" id="CHEBI:15378"/>
        <dbReference type="ChEBI" id="CHEBI:29950"/>
        <dbReference type="ChEBI" id="CHEBI:50058"/>
        <dbReference type="ChEBI" id="CHEBI:57783"/>
        <dbReference type="ChEBI" id="CHEBI:58349"/>
        <dbReference type="EC" id="1.8.1.8"/>
    </reaction>
</comment>
<comment type="subcellular location">
    <subcellularLocation>
        <location evidence="1">Cell inner membrane</location>
        <topology evidence="1">Multi-pass membrane protein</topology>
    </subcellularLocation>
</comment>
<comment type="similarity">
    <text evidence="1">Belongs to the thioredoxin family. DsbD subfamily.</text>
</comment>
<reference key="1">
    <citation type="journal article" date="2006" name="Mol. Microbiol.">
        <title>Role of pathogenicity island-associated integrases in the genome plasticity of uropathogenic Escherichia coli strain 536.</title>
        <authorList>
            <person name="Hochhut B."/>
            <person name="Wilde C."/>
            <person name="Balling G."/>
            <person name="Middendorf B."/>
            <person name="Dobrindt U."/>
            <person name="Brzuszkiewicz E."/>
            <person name="Gottschalk G."/>
            <person name="Carniel E."/>
            <person name="Hacker J."/>
        </authorList>
    </citation>
    <scope>NUCLEOTIDE SEQUENCE [LARGE SCALE GENOMIC DNA]</scope>
    <source>
        <strain>536 / UPEC</strain>
    </source>
</reference>
<accession>Q0T9Q5</accession>
<organism>
    <name type="scientific">Escherichia coli O6:K15:H31 (strain 536 / UPEC)</name>
    <dbReference type="NCBI Taxonomy" id="362663"/>
    <lineage>
        <taxon>Bacteria</taxon>
        <taxon>Pseudomonadati</taxon>
        <taxon>Pseudomonadota</taxon>
        <taxon>Gammaproteobacteria</taxon>
        <taxon>Enterobacterales</taxon>
        <taxon>Enterobacteriaceae</taxon>
        <taxon>Escherichia</taxon>
    </lineage>
</organism>
<feature type="signal peptide" evidence="1">
    <location>
        <begin position="1"/>
        <end position="19"/>
    </location>
</feature>
<feature type="chain" id="PRO_0000304388" description="Thiol:disulfide interchange protein DsbD">
    <location>
        <begin position="20"/>
        <end position="565"/>
    </location>
</feature>
<feature type="transmembrane region" description="Helical" evidence="1">
    <location>
        <begin position="163"/>
        <end position="183"/>
    </location>
</feature>
<feature type="transmembrane region" description="Helical" evidence="1">
    <location>
        <begin position="208"/>
        <end position="228"/>
    </location>
</feature>
<feature type="transmembrane region" description="Helical" evidence="1">
    <location>
        <begin position="243"/>
        <end position="263"/>
    </location>
</feature>
<feature type="transmembrane region" description="Helical" evidence="1">
    <location>
        <begin position="289"/>
        <end position="309"/>
    </location>
</feature>
<feature type="transmembrane region" description="Helical" evidence="1">
    <location>
        <begin position="323"/>
        <end position="343"/>
    </location>
</feature>
<feature type="transmembrane region" description="Helical" evidence="1">
    <location>
        <begin position="357"/>
        <end position="377"/>
    </location>
</feature>
<feature type="transmembrane region" description="Helical" evidence="1">
    <location>
        <begin position="384"/>
        <end position="404"/>
    </location>
</feature>
<feature type="domain" description="Thioredoxin" evidence="1">
    <location>
        <begin position="434"/>
        <end position="565"/>
    </location>
</feature>
<feature type="disulfide bond" description="Redox-active" evidence="1">
    <location>
        <begin position="122"/>
        <end position="128"/>
    </location>
</feature>
<feature type="disulfide bond" description="Redox-active" evidence="1">
    <location>
        <begin position="182"/>
        <end position="304"/>
    </location>
</feature>
<feature type="disulfide bond" description="Redox-active" evidence="1">
    <location>
        <begin position="480"/>
        <end position="483"/>
    </location>
</feature>
<sequence length="565" mass="61915">MAQRIFTLILLLCSTSVFAGLFDAPGRSQFVPADQAFAFDFQQNQHDLNLTWQIKDGYYLYRKQIRITPEHAKIADVQLPQGVWHEDEFYGKSEIYRDRLTLPVTINQASAGATLTVTYQGCADAGFCYPPETKTVPLSEVVANNEASQPVSVPQQEQPTAQLPFSALWALLIGIGIAFTPCVLPMYPLISGIVLGGKQRLSTARALLLTFIYVQGMALTYTALGLVVAAAGLQFQAALQHPYVLIGLAIVFTLLAMSMFGLFTLQLPSSLQTRLTLMSNRQQGGSPGGVFIMGAIAGLICSPCTTAPLSAILLYIAQSGNMWLGGGTLYLYALGMGLPLMLITVFGNRLLPKSGPWMEQVKTAFGFVILALPVFLLERVIGDIWGLRLWSALGVAFFGWAFITSLQAKRGWMRVVQIILLAAALVSVRPLQDWAFGETHTAQTQTHLNFTQIKTVDELNQALVEAKGKPVMLDLYADWCVACKEFEKYTFSDPQVQKALADTVLLQANVTANDAQDVALLKHLNVLGLPTILFFDGQGQEHPQARVTGFMDAETFSAHLRDRQP</sequence>
<evidence type="ECO:0000255" key="1">
    <source>
        <dbReference type="HAMAP-Rule" id="MF_00399"/>
    </source>
</evidence>
<protein>
    <recommendedName>
        <fullName evidence="1">Thiol:disulfide interchange protein DsbD</fullName>
        <ecNumber evidence="1">1.8.1.8</ecNumber>
    </recommendedName>
    <alternativeName>
        <fullName evidence="1">Protein-disulfide reductase</fullName>
        <shortName evidence="1">Disulfide reductase</shortName>
    </alternativeName>
</protein>
<name>DSBD_ECOL5</name>
<dbReference type="EC" id="1.8.1.8" evidence="1"/>
<dbReference type="EMBL" id="CP000247">
    <property type="protein sequence ID" value="ABG72324.1"/>
    <property type="molecule type" value="Genomic_DNA"/>
</dbReference>
<dbReference type="RefSeq" id="WP_000068942.1">
    <property type="nucleotide sequence ID" value="NC_008253.1"/>
</dbReference>
<dbReference type="BMRB" id="Q0T9Q5"/>
<dbReference type="SMR" id="Q0T9Q5"/>
<dbReference type="KEGG" id="ecp:ECP_4380"/>
<dbReference type="HOGENOM" id="CLU_014657_3_0_6"/>
<dbReference type="Proteomes" id="UP000009182">
    <property type="component" value="Chromosome"/>
</dbReference>
<dbReference type="GO" id="GO:0005886">
    <property type="term" value="C:plasma membrane"/>
    <property type="evidence" value="ECO:0007669"/>
    <property type="project" value="UniProtKB-SubCell"/>
</dbReference>
<dbReference type="GO" id="GO:0009055">
    <property type="term" value="F:electron transfer activity"/>
    <property type="evidence" value="ECO:0007669"/>
    <property type="project" value="UniProtKB-UniRule"/>
</dbReference>
<dbReference type="GO" id="GO:0047134">
    <property type="term" value="F:protein-disulfide reductase [NAD(P)H] activity"/>
    <property type="evidence" value="ECO:0007669"/>
    <property type="project" value="UniProtKB-UniRule"/>
</dbReference>
<dbReference type="GO" id="GO:0045454">
    <property type="term" value="P:cell redox homeostasis"/>
    <property type="evidence" value="ECO:0007669"/>
    <property type="project" value="TreeGrafter"/>
</dbReference>
<dbReference type="GO" id="GO:0017004">
    <property type="term" value="P:cytochrome complex assembly"/>
    <property type="evidence" value="ECO:0007669"/>
    <property type="project" value="UniProtKB-UniRule"/>
</dbReference>
<dbReference type="CDD" id="cd02953">
    <property type="entry name" value="DsbDgamma"/>
    <property type="match status" value="1"/>
</dbReference>
<dbReference type="FunFam" id="2.60.40.1250:FF:000001">
    <property type="entry name" value="Thiol:disulfide interchange protein DsbD"/>
    <property type="match status" value="1"/>
</dbReference>
<dbReference type="FunFam" id="3.40.30.10:FF:000116">
    <property type="entry name" value="Thiol:disulfide interchange protein DsbD"/>
    <property type="match status" value="1"/>
</dbReference>
<dbReference type="Gene3D" id="3.40.30.10">
    <property type="entry name" value="Glutaredoxin"/>
    <property type="match status" value="1"/>
</dbReference>
<dbReference type="Gene3D" id="2.60.40.1250">
    <property type="entry name" value="Thiol:disulfide interchange protein DsbD, N-terminal domain"/>
    <property type="match status" value="1"/>
</dbReference>
<dbReference type="HAMAP" id="MF_00399">
    <property type="entry name" value="DbsD"/>
    <property type="match status" value="1"/>
</dbReference>
<dbReference type="InterPro" id="IPR003834">
    <property type="entry name" value="Cyt_c_assmbl_TM_dom"/>
</dbReference>
<dbReference type="InterPro" id="IPR035671">
    <property type="entry name" value="DsbD_gamma"/>
</dbReference>
<dbReference type="InterPro" id="IPR028250">
    <property type="entry name" value="DsbDN"/>
</dbReference>
<dbReference type="InterPro" id="IPR036929">
    <property type="entry name" value="DsbDN_sf"/>
</dbReference>
<dbReference type="InterPro" id="IPR022910">
    <property type="entry name" value="Thiol_diS_interchange_DbsD"/>
</dbReference>
<dbReference type="InterPro" id="IPR012336">
    <property type="entry name" value="Thioredoxin-like_fold"/>
</dbReference>
<dbReference type="InterPro" id="IPR036249">
    <property type="entry name" value="Thioredoxin-like_sf"/>
</dbReference>
<dbReference type="InterPro" id="IPR017937">
    <property type="entry name" value="Thioredoxin_CS"/>
</dbReference>
<dbReference type="InterPro" id="IPR013766">
    <property type="entry name" value="Thioredoxin_domain"/>
</dbReference>
<dbReference type="NCBIfam" id="NF001419">
    <property type="entry name" value="PRK00293.1"/>
    <property type="match status" value="1"/>
</dbReference>
<dbReference type="PANTHER" id="PTHR32234">
    <property type="entry name" value="THIOL:DISULFIDE INTERCHANGE PROTEIN DSBD"/>
    <property type="match status" value="1"/>
</dbReference>
<dbReference type="PANTHER" id="PTHR32234:SF0">
    <property type="entry name" value="THIOL:DISULFIDE INTERCHANGE PROTEIN DSBD"/>
    <property type="match status" value="1"/>
</dbReference>
<dbReference type="Pfam" id="PF11412">
    <property type="entry name" value="DsbD_N"/>
    <property type="match status" value="1"/>
</dbReference>
<dbReference type="Pfam" id="PF02683">
    <property type="entry name" value="DsbD_TM"/>
    <property type="match status" value="1"/>
</dbReference>
<dbReference type="Pfam" id="PF13098">
    <property type="entry name" value="Thioredoxin_2"/>
    <property type="match status" value="1"/>
</dbReference>
<dbReference type="SUPFAM" id="SSF74863">
    <property type="entry name" value="Thiol:disulfide interchange protein DsbD, N-terminal domain (DsbD-alpha)"/>
    <property type="match status" value="1"/>
</dbReference>
<dbReference type="SUPFAM" id="SSF52833">
    <property type="entry name" value="Thioredoxin-like"/>
    <property type="match status" value="1"/>
</dbReference>
<dbReference type="PROSITE" id="PS00194">
    <property type="entry name" value="THIOREDOXIN_1"/>
    <property type="match status" value="1"/>
</dbReference>
<dbReference type="PROSITE" id="PS51352">
    <property type="entry name" value="THIOREDOXIN_2"/>
    <property type="match status" value="1"/>
</dbReference>